<sequence>MVRVTLVNYTKRPLETITWAALISYWGEWSTESFERISENDVEKHLPRILGYGHESILEHATFTFSIEGCSRVCTHQLVRHRIASYTQQSQRYIVLDEENVEETFVIPESIKKDRELYEKWKKVMAETISLYKESINRGVHQEDARFILPQAVKTKIIVTMNLRELKHFFGLRLCERAQWEIREVAWKMLEEMAKRDDIRPIIKWAKLGPRCIQFGYCPERDLMPPGCLKKTRKKWEKVAESKS</sequence>
<reference key="1">
    <citation type="journal article" date="1999" name="Genetics">
        <title>Divergence of the hyperthermophilic archaea Pyrococcus furiosus and P. horikoshii inferred from complete genomic sequences.</title>
        <authorList>
            <person name="Maeder D.L."/>
            <person name="Weiss R.B."/>
            <person name="Dunn D.M."/>
            <person name="Cherry J.L."/>
            <person name="Gonzalez J.M."/>
            <person name="DiRuggiero J."/>
            <person name="Robb F.T."/>
        </authorList>
    </citation>
    <scope>NUCLEOTIDE SEQUENCE [LARGE SCALE GENOMIC DNA]</scope>
    <source>
        <strain>ATCC 43587 / DSM 3638 / JCM 8422 / Vc1</strain>
    </source>
</reference>
<reference key="2">
    <citation type="journal article" date="2006" name="Biochem. J.">
        <title>Archaeal Pyrococcus furiosus thymidylate synthase 1 is an RNA-binding protein.</title>
        <authorList>
            <person name="Kanai A."/>
            <person name="Sato A."/>
            <person name="Imoto J."/>
            <person name="Tomita M."/>
        </authorList>
    </citation>
    <scope>RNA-BINDING</scope>
    <scope>INDUCTION</scope>
    <source>
        <strain>ATCC 43587 / DSM 3638 / JCM 8422 / Vc1</strain>
    </source>
</reference>
<evidence type="ECO:0000255" key="1">
    <source>
        <dbReference type="HAMAP-Rule" id="MF_01408"/>
    </source>
</evidence>
<evidence type="ECO:0000255" key="2">
    <source>
        <dbReference type="PROSITE-ProRule" id="PRU00661"/>
    </source>
</evidence>
<evidence type="ECO:0000269" key="3">
    <source>
    </source>
</evidence>
<evidence type="ECO:0000303" key="4">
    <source>
    </source>
</evidence>
<organism>
    <name type="scientific">Pyrococcus furiosus (strain ATCC 43587 / DSM 3638 / JCM 8422 / Vc1)</name>
    <dbReference type="NCBI Taxonomy" id="186497"/>
    <lineage>
        <taxon>Archaea</taxon>
        <taxon>Methanobacteriati</taxon>
        <taxon>Methanobacteriota</taxon>
        <taxon>Thermococci</taxon>
        <taxon>Thermococcales</taxon>
        <taxon>Thermococcaceae</taxon>
        <taxon>Pyrococcus</taxon>
    </lineage>
</organism>
<comment type="function">
    <text evidence="1">Catalyzes the reductive methylation of 2'-deoxyuridine-5'-monophosphate (dUMP) to 2'-deoxythymidine-5'-monophosphate (dTMP) while utilizing 5,10-methylenetetrahydrofolate (mTHF) as the methyl donor, and NADPH and FADH(2) as the reductant.</text>
</comment>
<comment type="catalytic activity">
    <reaction evidence="1">
        <text>dUMP + (6R)-5,10-methylene-5,6,7,8-tetrahydrofolate + NADPH + H(+) = dTMP + (6S)-5,6,7,8-tetrahydrofolate + NADP(+)</text>
        <dbReference type="Rhea" id="RHEA:29043"/>
        <dbReference type="ChEBI" id="CHEBI:15378"/>
        <dbReference type="ChEBI" id="CHEBI:15636"/>
        <dbReference type="ChEBI" id="CHEBI:57453"/>
        <dbReference type="ChEBI" id="CHEBI:57783"/>
        <dbReference type="ChEBI" id="CHEBI:58349"/>
        <dbReference type="ChEBI" id="CHEBI:63528"/>
        <dbReference type="ChEBI" id="CHEBI:246422"/>
        <dbReference type="EC" id="2.1.1.148"/>
    </reaction>
</comment>
<comment type="cofactor">
    <cofactor evidence="1">
        <name>FAD</name>
        <dbReference type="ChEBI" id="CHEBI:57692"/>
    </cofactor>
    <text evidence="1">Binds 4 FAD per tetramer. Each FAD binding site is formed by three monomers.</text>
</comment>
<comment type="pathway">
    <text evidence="1">Pyrimidine metabolism; dTTP biosynthesis.</text>
</comment>
<comment type="subunit">
    <text evidence="1">Homotetramer.</text>
</comment>
<comment type="induction">
    <text evidence="3">RNA-binding protein that probably controls the regulation of its own mRNA.</text>
</comment>
<comment type="similarity">
    <text evidence="1">Belongs to the thymidylate synthase ThyX family.</text>
</comment>
<accession>Q8U3C9</accession>
<keyword id="KW-0274">FAD</keyword>
<keyword id="KW-0285">Flavoprotein</keyword>
<keyword id="KW-0489">Methyltransferase</keyword>
<keyword id="KW-0521">NADP</keyword>
<keyword id="KW-0545">Nucleotide biosynthesis</keyword>
<keyword id="KW-1185">Reference proteome</keyword>
<keyword id="KW-0694">RNA-binding</keyword>
<keyword id="KW-0808">Transferase</keyword>
<feature type="chain" id="PRO_0000175593" description="Flavin-dependent thymidylate synthase">
    <location>
        <begin position="1"/>
        <end position="244"/>
    </location>
</feature>
<feature type="domain" description="ThyX" evidence="2">
    <location>
        <begin position="2"/>
        <end position="207"/>
    </location>
</feature>
<feature type="short sequence motif" description="ThyX motif" evidence="1">
    <location>
        <begin position="80"/>
        <end position="90"/>
    </location>
</feature>
<feature type="active site" description="Involved in ionization of N3 of dUMP, leading to its activation" evidence="1">
    <location>
        <position position="173"/>
    </location>
</feature>
<feature type="binding site" evidence="1">
    <location>
        <position position="56"/>
    </location>
    <ligand>
        <name>FAD</name>
        <dbReference type="ChEBI" id="CHEBI:57692"/>
        <note>ligand shared between neighboring subunits</note>
    </ligand>
</feature>
<feature type="binding site" evidence="1">
    <location>
        <begin position="77"/>
        <end position="80"/>
    </location>
    <ligand>
        <name>dUMP</name>
        <dbReference type="ChEBI" id="CHEBI:246422"/>
        <note>ligand shared between dimeric partners</note>
    </ligand>
</feature>
<feature type="binding site" evidence="1">
    <location>
        <begin position="80"/>
        <end position="82"/>
    </location>
    <ligand>
        <name>FAD</name>
        <dbReference type="ChEBI" id="CHEBI:57692"/>
        <note>ligand shared between neighboring subunits</note>
    </ligand>
</feature>
<feature type="binding site" description="in other chain" evidence="1">
    <location>
        <begin position="88"/>
        <end position="92"/>
    </location>
    <ligand>
        <name>dUMP</name>
        <dbReference type="ChEBI" id="CHEBI:246422"/>
        <note>ligand shared between dimeric partners</note>
    </ligand>
</feature>
<feature type="binding site" evidence="1">
    <location>
        <position position="88"/>
    </location>
    <ligand>
        <name>FAD</name>
        <dbReference type="ChEBI" id="CHEBI:57692"/>
        <note>ligand shared between neighboring subunits</note>
    </ligand>
</feature>
<feature type="binding site" description="in other chain" evidence="1">
    <location>
        <position position="146"/>
    </location>
    <ligand>
        <name>dUMP</name>
        <dbReference type="ChEBI" id="CHEBI:246422"/>
        <note>ligand shared between dimeric partners</note>
    </ligand>
</feature>
<feature type="binding site" evidence="1">
    <location>
        <begin position="162"/>
        <end position="164"/>
    </location>
    <ligand>
        <name>FAD</name>
        <dbReference type="ChEBI" id="CHEBI:57692"/>
        <note>ligand shared between neighboring subunits</note>
    </ligand>
</feature>
<feature type="binding site" evidence="1">
    <location>
        <position position="168"/>
    </location>
    <ligand>
        <name>FAD</name>
        <dbReference type="ChEBI" id="CHEBI:57692"/>
        <note>ligand shared between neighboring subunits</note>
    </ligand>
</feature>
<feature type="binding site" evidence="1">
    <location>
        <position position="173"/>
    </location>
    <ligand>
        <name>dUMP</name>
        <dbReference type="ChEBI" id="CHEBI:246422"/>
        <note>ligand shared between dimeric partners</note>
    </ligand>
</feature>
<dbReference type="EC" id="2.1.1.148" evidence="1"/>
<dbReference type="EMBL" id="AE009950">
    <property type="protein sequence ID" value="AAL80664.1"/>
    <property type="molecule type" value="Genomic_DNA"/>
</dbReference>
<dbReference type="RefSeq" id="WP_011011658.1">
    <property type="nucleotide sequence ID" value="NZ_CP023154.1"/>
</dbReference>
<dbReference type="SMR" id="Q8U3C9"/>
<dbReference type="STRING" id="186497.PF0540"/>
<dbReference type="PaxDb" id="186497-PF0540"/>
<dbReference type="GeneID" id="41712344"/>
<dbReference type="KEGG" id="pfu:PF0540"/>
<dbReference type="PATRIC" id="fig|186497.12.peg.568"/>
<dbReference type="eggNOG" id="arCOG01883">
    <property type="taxonomic scope" value="Archaea"/>
</dbReference>
<dbReference type="HOGENOM" id="CLU_077585_0_0_2"/>
<dbReference type="OrthoDB" id="18918at2157"/>
<dbReference type="PhylomeDB" id="Q8U3C9"/>
<dbReference type="BRENDA" id="2.1.1.148">
    <property type="organism ID" value="5243"/>
</dbReference>
<dbReference type="UniPathway" id="UPA00575"/>
<dbReference type="Proteomes" id="UP000001013">
    <property type="component" value="Chromosome"/>
</dbReference>
<dbReference type="GO" id="GO:0050660">
    <property type="term" value="F:flavin adenine dinucleotide binding"/>
    <property type="evidence" value="ECO:0007669"/>
    <property type="project" value="InterPro"/>
</dbReference>
<dbReference type="GO" id="GO:0070402">
    <property type="term" value="F:NADPH binding"/>
    <property type="evidence" value="ECO:0007669"/>
    <property type="project" value="TreeGrafter"/>
</dbReference>
<dbReference type="GO" id="GO:0003723">
    <property type="term" value="F:RNA binding"/>
    <property type="evidence" value="ECO:0007669"/>
    <property type="project" value="UniProtKB-KW"/>
</dbReference>
<dbReference type="GO" id="GO:0050797">
    <property type="term" value="F:thymidylate synthase (FAD) activity"/>
    <property type="evidence" value="ECO:0007669"/>
    <property type="project" value="UniProtKB-UniRule"/>
</dbReference>
<dbReference type="GO" id="GO:0004799">
    <property type="term" value="F:thymidylate synthase activity"/>
    <property type="evidence" value="ECO:0007669"/>
    <property type="project" value="TreeGrafter"/>
</dbReference>
<dbReference type="GO" id="GO:0006231">
    <property type="term" value="P:dTMP biosynthetic process"/>
    <property type="evidence" value="ECO:0007669"/>
    <property type="project" value="UniProtKB-UniRule"/>
</dbReference>
<dbReference type="GO" id="GO:0006235">
    <property type="term" value="P:dTTP biosynthetic process"/>
    <property type="evidence" value="ECO:0007669"/>
    <property type="project" value="UniProtKB-UniRule"/>
</dbReference>
<dbReference type="GO" id="GO:0032259">
    <property type="term" value="P:methylation"/>
    <property type="evidence" value="ECO:0007669"/>
    <property type="project" value="UniProtKB-KW"/>
</dbReference>
<dbReference type="CDD" id="cd20175">
    <property type="entry name" value="ThyX"/>
    <property type="match status" value="1"/>
</dbReference>
<dbReference type="Gene3D" id="3.30.1360.170">
    <property type="match status" value="1"/>
</dbReference>
<dbReference type="HAMAP" id="MF_01408">
    <property type="entry name" value="ThyX"/>
    <property type="match status" value="1"/>
</dbReference>
<dbReference type="InterPro" id="IPR003669">
    <property type="entry name" value="Thymidylate_synthase_ThyX"/>
</dbReference>
<dbReference type="InterPro" id="IPR036098">
    <property type="entry name" value="Thymidylate_synthase_ThyX_sf"/>
</dbReference>
<dbReference type="NCBIfam" id="TIGR02170">
    <property type="entry name" value="thyX"/>
    <property type="match status" value="1"/>
</dbReference>
<dbReference type="PANTHER" id="PTHR34934">
    <property type="entry name" value="FLAVIN-DEPENDENT THYMIDYLATE SYNTHASE"/>
    <property type="match status" value="1"/>
</dbReference>
<dbReference type="PANTHER" id="PTHR34934:SF1">
    <property type="entry name" value="FLAVIN-DEPENDENT THYMIDYLATE SYNTHASE"/>
    <property type="match status" value="1"/>
</dbReference>
<dbReference type="Pfam" id="PF02511">
    <property type="entry name" value="Thy1"/>
    <property type="match status" value="1"/>
</dbReference>
<dbReference type="SUPFAM" id="SSF69796">
    <property type="entry name" value="Thymidylate synthase-complementing protein Thy1"/>
    <property type="match status" value="1"/>
</dbReference>
<dbReference type="PROSITE" id="PS51331">
    <property type="entry name" value="THYX"/>
    <property type="match status" value="1"/>
</dbReference>
<proteinExistence type="evidence at protein level"/>
<name>THYX_PYRFU</name>
<gene>
    <name evidence="1" type="primary">thyX</name>
    <name evidence="4" type="synonym">thy1</name>
    <name type="ordered locus">PF0540</name>
</gene>
<protein>
    <recommendedName>
        <fullName evidence="1">Flavin-dependent thymidylate synthase</fullName>
        <shortName evidence="1">FDTS</shortName>
        <ecNumber evidence="1">2.1.1.148</ecNumber>
    </recommendedName>
    <alternativeName>
        <fullName evidence="1">FAD-dependent thymidylate synthase</fullName>
    </alternativeName>
    <alternativeName>
        <fullName evidence="1">Thymidylate synthase ThyX</fullName>
        <shortName evidence="1">TS</shortName>
        <shortName evidence="1">TSase</shortName>
    </alternativeName>
</protein>